<evidence type="ECO:0000250" key="1"/>
<evidence type="ECO:0000255" key="2"/>
<evidence type="ECO:0000255" key="3">
    <source>
        <dbReference type="PROSITE-ProRule" id="PRU00159"/>
    </source>
</evidence>
<evidence type="ECO:0000255" key="4">
    <source>
        <dbReference type="PROSITE-ProRule" id="PRU10027"/>
    </source>
</evidence>
<evidence type="ECO:0000256" key="5">
    <source>
        <dbReference type="SAM" id="MobiDB-lite"/>
    </source>
</evidence>
<evidence type="ECO:0000305" key="6"/>
<organism>
    <name type="scientific">Neurospora crassa (strain ATCC 24698 / 74-OR23-1A / CBS 708.71 / DSM 1257 / FGSC 987)</name>
    <dbReference type="NCBI Taxonomy" id="367110"/>
    <lineage>
        <taxon>Eukaryota</taxon>
        <taxon>Fungi</taxon>
        <taxon>Dikarya</taxon>
        <taxon>Ascomycota</taxon>
        <taxon>Pezizomycotina</taxon>
        <taxon>Sordariomycetes</taxon>
        <taxon>Sordariomycetidae</taxon>
        <taxon>Sordariales</taxon>
        <taxon>Sordariaceae</taxon>
        <taxon>Neurospora</taxon>
    </lineage>
</organism>
<feature type="chain" id="PRO_0000086442" description="G2-specific protein kinase nim-1">
    <location>
        <begin position="1"/>
        <end position="858"/>
    </location>
</feature>
<feature type="domain" description="Protein kinase" evidence="3">
    <location>
        <begin position="7"/>
        <end position="290"/>
    </location>
</feature>
<feature type="region of interest" description="Disordered" evidence="5">
    <location>
        <begin position="495"/>
        <end position="693"/>
    </location>
</feature>
<feature type="region of interest" description="Disordered" evidence="5">
    <location>
        <begin position="747"/>
        <end position="858"/>
    </location>
</feature>
<feature type="coiled-coil region" evidence="2">
    <location>
        <begin position="291"/>
        <end position="383"/>
    </location>
</feature>
<feature type="compositionally biased region" description="Basic and acidic residues" evidence="5">
    <location>
        <begin position="516"/>
        <end position="525"/>
    </location>
</feature>
<feature type="compositionally biased region" description="Acidic residues" evidence="5">
    <location>
        <begin position="526"/>
        <end position="535"/>
    </location>
</feature>
<feature type="compositionally biased region" description="Polar residues" evidence="5">
    <location>
        <begin position="548"/>
        <end position="572"/>
    </location>
</feature>
<feature type="compositionally biased region" description="Polar residues" evidence="5">
    <location>
        <begin position="580"/>
        <end position="598"/>
    </location>
</feature>
<feature type="compositionally biased region" description="Low complexity" evidence="5">
    <location>
        <begin position="636"/>
        <end position="648"/>
    </location>
</feature>
<feature type="compositionally biased region" description="Polar residues" evidence="5">
    <location>
        <begin position="650"/>
        <end position="661"/>
    </location>
</feature>
<feature type="compositionally biased region" description="Low complexity" evidence="5">
    <location>
        <begin position="676"/>
        <end position="691"/>
    </location>
</feature>
<feature type="compositionally biased region" description="Polar residues" evidence="5">
    <location>
        <begin position="760"/>
        <end position="780"/>
    </location>
</feature>
<feature type="compositionally biased region" description="Low complexity" evidence="5">
    <location>
        <begin position="781"/>
        <end position="802"/>
    </location>
</feature>
<feature type="active site" description="Proton acceptor" evidence="3 4">
    <location>
        <position position="161"/>
    </location>
</feature>
<feature type="binding site" evidence="3">
    <location>
        <begin position="13"/>
        <end position="21"/>
    </location>
    <ligand>
        <name>ATP</name>
        <dbReference type="ChEBI" id="CHEBI:30616"/>
    </ligand>
</feature>
<feature type="binding site" evidence="3">
    <location>
        <position position="36"/>
    </location>
    <ligand>
        <name>ATP</name>
        <dbReference type="ChEBI" id="CHEBI:30616"/>
    </ligand>
</feature>
<feature type="modified residue" description="Phosphothreonine; by autocatalysis" evidence="1">
    <location>
        <position position="194"/>
    </location>
</feature>
<protein>
    <recommendedName>
        <fullName>G2-specific protein kinase nim-1</fullName>
        <ecNumber>2.7.11.1</ecNumber>
    </recommendedName>
</protein>
<comment type="function">
    <text>Protein kinase that plays an important role in mitotic regulation.</text>
</comment>
<comment type="catalytic activity">
    <reaction>
        <text>L-seryl-[protein] + ATP = O-phospho-L-seryl-[protein] + ADP + H(+)</text>
        <dbReference type="Rhea" id="RHEA:17989"/>
        <dbReference type="Rhea" id="RHEA-COMP:9863"/>
        <dbReference type="Rhea" id="RHEA-COMP:11604"/>
        <dbReference type="ChEBI" id="CHEBI:15378"/>
        <dbReference type="ChEBI" id="CHEBI:29999"/>
        <dbReference type="ChEBI" id="CHEBI:30616"/>
        <dbReference type="ChEBI" id="CHEBI:83421"/>
        <dbReference type="ChEBI" id="CHEBI:456216"/>
        <dbReference type="EC" id="2.7.11.1"/>
    </reaction>
</comment>
<comment type="catalytic activity">
    <reaction>
        <text>L-threonyl-[protein] + ATP = O-phospho-L-threonyl-[protein] + ADP + H(+)</text>
        <dbReference type="Rhea" id="RHEA:46608"/>
        <dbReference type="Rhea" id="RHEA-COMP:11060"/>
        <dbReference type="Rhea" id="RHEA-COMP:11605"/>
        <dbReference type="ChEBI" id="CHEBI:15378"/>
        <dbReference type="ChEBI" id="CHEBI:30013"/>
        <dbReference type="ChEBI" id="CHEBI:30616"/>
        <dbReference type="ChEBI" id="CHEBI:61977"/>
        <dbReference type="ChEBI" id="CHEBI:456216"/>
        <dbReference type="EC" id="2.7.11.1"/>
    </reaction>
</comment>
<comment type="subcellular location">
    <subcellularLocation>
        <location evidence="6">Nucleus</location>
    </subcellularLocation>
</comment>
<comment type="developmental stage">
    <text>Accumulates when cells are arrested in G2; degraded as cells traverse mitosis.</text>
</comment>
<comment type="similarity">
    <text evidence="6">Belongs to the protein kinase superfamily. CAMK Ser/Thr protein kinase family.</text>
</comment>
<comment type="sequence caution" evidence="6">
    <conflict type="frameshift">
        <sequence resource="EMBL-CDS" id="AAA80145"/>
    </conflict>
</comment>
<proteinExistence type="evidence at transcript level"/>
<keyword id="KW-0067">ATP-binding</keyword>
<keyword id="KW-0131">Cell cycle</keyword>
<keyword id="KW-0132">Cell division</keyword>
<keyword id="KW-0175">Coiled coil</keyword>
<keyword id="KW-0418">Kinase</keyword>
<keyword id="KW-0498">Mitosis</keyword>
<keyword id="KW-0547">Nucleotide-binding</keyword>
<keyword id="KW-0539">Nucleus</keyword>
<keyword id="KW-0597">Phosphoprotein</keyword>
<keyword id="KW-1185">Reference proteome</keyword>
<keyword id="KW-0723">Serine/threonine-protein kinase</keyword>
<keyword id="KW-0808">Transferase</keyword>
<sequence length="858" mass="94347">MSESDKYELLEKIGHGSFGIIRKVRRKADGMILCRKEISYLKMSQKEREQLHAEFSILSTLRHPNIVGYYHREHLKATQDLHLYMEYCGNGDLGRVIRNLIKNNQYAEESFVWSIFSQLVTALYRCHYGVDPPEVGKTVLGLGSTARPKPPSGGMTILHRDLKPENVFLGEDNSVKLGDFGLSKVMQSHDFASTYVGTPFYMSPEICAAEKYTLKSDIWSLGCIIYELCAREPPFNAKTHYQLVQKIKEGKIAPLPSVYSGELFATIKDCLRVNPDRRPDTATLLNLPIVRLMRKEKEVVEFSRTLRTKEETLNKRIRELDSKLSALETEKSSIRAEIDASLRREWEVKARLEIDRLVAQEIESLQQKFEQEVQARVEAELQRHGRGPMFNSHGQQGSFSSTAATLVSDYNLSSVGSGDGDFPSTTDITDISIAESTDGSDITKKIPRTPFHRAQTYSSAPAESVLGTPMDIEMASPSPITIASLSLSPRRMALTKAPTTNPRMIFGEEPTSTDKSNWEVPRETEMIDSGDESEAEALVPSPKRITKSSKNPFSTVTTRSRPSLNSQQNSNVLPIHGLRSKQTLATRSKTVSGVSSIGQHPLRSAPSAPSLRDRKPSPTRRLSRIPSVTGVGRRLSANNINNSSNGGSDAPSSTVTSNITVRTRGLKRMSSTCDESSFSQQQNNQPQQSLPQAPPLKKIGLMAAKNIRGSSLVELHQARAGGRPISAIISNEAKLRAFKEHATIAASAVDSSSSSSSSSGQSQLPTRPRSQPQPITANFEQQQQQQQSNTNSISSSNSAGSGSATGTGTGAGTKSMPWPVAPVWNREVETEEMPSPFIVKTSKRPASFVRPASNLSQS</sequence>
<name>NIM1_NEUCR</name>
<accession>P48479</accession>
<accession>Q7RVM3</accession>
<dbReference type="EC" id="2.7.11.1"/>
<dbReference type="EMBL" id="L42573">
    <property type="protein sequence ID" value="AAA80145.1"/>
    <property type="status" value="ALT_FRAME"/>
    <property type="molecule type" value="mRNA"/>
</dbReference>
<dbReference type="EMBL" id="CM002236">
    <property type="protein sequence ID" value="EAA36051.2"/>
    <property type="molecule type" value="Genomic_DNA"/>
</dbReference>
<dbReference type="RefSeq" id="XP_965287.2">
    <property type="nucleotide sequence ID" value="XM_960194.3"/>
</dbReference>
<dbReference type="SMR" id="P48479"/>
<dbReference type="STRING" id="367110.P48479"/>
<dbReference type="PaxDb" id="5141-EFNCRP00000003020"/>
<dbReference type="EnsemblFungi" id="EAA36051">
    <property type="protein sequence ID" value="EAA36051"/>
    <property type="gene ID" value="NCU03187"/>
</dbReference>
<dbReference type="GeneID" id="3881436"/>
<dbReference type="KEGG" id="ncr:NCU03187"/>
<dbReference type="VEuPathDB" id="FungiDB:NCU03187"/>
<dbReference type="HOGENOM" id="CLU_000288_63_23_1"/>
<dbReference type="InParanoid" id="P48479"/>
<dbReference type="OMA" id="AYFERDH"/>
<dbReference type="OrthoDB" id="10250725at2759"/>
<dbReference type="BRENDA" id="2.7.11.22">
    <property type="organism ID" value="3627"/>
</dbReference>
<dbReference type="Proteomes" id="UP000001805">
    <property type="component" value="Chromosome 1, Linkage Group I"/>
</dbReference>
<dbReference type="GO" id="GO:0005737">
    <property type="term" value="C:cytoplasm"/>
    <property type="evidence" value="ECO:0000318"/>
    <property type="project" value="GO_Central"/>
</dbReference>
<dbReference type="GO" id="GO:0044732">
    <property type="term" value="C:mitotic spindle pole body"/>
    <property type="evidence" value="ECO:0000318"/>
    <property type="project" value="GO_Central"/>
</dbReference>
<dbReference type="GO" id="GO:0005634">
    <property type="term" value="C:nucleus"/>
    <property type="evidence" value="ECO:0000318"/>
    <property type="project" value="GO_Central"/>
</dbReference>
<dbReference type="GO" id="GO:0005524">
    <property type="term" value="F:ATP binding"/>
    <property type="evidence" value="ECO:0007669"/>
    <property type="project" value="UniProtKB-KW"/>
</dbReference>
<dbReference type="GO" id="GO:0106310">
    <property type="term" value="F:protein serine kinase activity"/>
    <property type="evidence" value="ECO:0007669"/>
    <property type="project" value="RHEA"/>
</dbReference>
<dbReference type="GO" id="GO:0004674">
    <property type="term" value="F:protein serine/threonine kinase activity"/>
    <property type="evidence" value="ECO:0000318"/>
    <property type="project" value="GO_Central"/>
</dbReference>
<dbReference type="GO" id="GO:0051301">
    <property type="term" value="P:cell division"/>
    <property type="evidence" value="ECO:0007669"/>
    <property type="project" value="UniProtKB-KW"/>
</dbReference>
<dbReference type="GO" id="GO:0007059">
    <property type="term" value="P:chromosome segregation"/>
    <property type="evidence" value="ECO:0000318"/>
    <property type="project" value="GO_Central"/>
</dbReference>
<dbReference type="GO" id="GO:0050921">
    <property type="term" value="P:positive regulation of chemotaxis"/>
    <property type="evidence" value="ECO:0000314"/>
    <property type="project" value="UniProtKB"/>
</dbReference>
<dbReference type="CDD" id="cd08217">
    <property type="entry name" value="STKc_Nek2"/>
    <property type="match status" value="1"/>
</dbReference>
<dbReference type="FunFam" id="1.10.510.10:FF:000697">
    <property type="entry name" value="G2-specific protein kinase nimA"/>
    <property type="match status" value="1"/>
</dbReference>
<dbReference type="FunFam" id="3.30.200.20:FF:000525">
    <property type="entry name" value="Serine/threonine-protein kinase KIN3"/>
    <property type="match status" value="1"/>
</dbReference>
<dbReference type="Gene3D" id="3.30.200.20">
    <property type="entry name" value="Phosphorylase Kinase, domain 1"/>
    <property type="match status" value="1"/>
</dbReference>
<dbReference type="Gene3D" id="1.10.510.10">
    <property type="entry name" value="Transferase(Phosphotransferase) domain 1"/>
    <property type="match status" value="1"/>
</dbReference>
<dbReference type="InterPro" id="IPR011009">
    <property type="entry name" value="Kinase-like_dom_sf"/>
</dbReference>
<dbReference type="InterPro" id="IPR051131">
    <property type="entry name" value="NEK_Ser/Thr_kinase_NIMA"/>
</dbReference>
<dbReference type="InterPro" id="IPR000719">
    <property type="entry name" value="Prot_kinase_dom"/>
</dbReference>
<dbReference type="InterPro" id="IPR008271">
    <property type="entry name" value="Ser/Thr_kinase_AS"/>
</dbReference>
<dbReference type="PANTHER" id="PTHR44899">
    <property type="entry name" value="CAMK FAMILY PROTEIN KINASE"/>
    <property type="match status" value="1"/>
</dbReference>
<dbReference type="PANTHER" id="PTHR44899:SF3">
    <property type="entry name" value="SERINE_THREONINE-PROTEIN KINASE NEK1"/>
    <property type="match status" value="1"/>
</dbReference>
<dbReference type="Pfam" id="PF00069">
    <property type="entry name" value="Pkinase"/>
    <property type="match status" value="2"/>
</dbReference>
<dbReference type="SMART" id="SM00220">
    <property type="entry name" value="S_TKc"/>
    <property type="match status" value="1"/>
</dbReference>
<dbReference type="SUPFAM" id="SSF56112">
    <property type="entry name" value="Protein kinase-like (PK-like)"/>
    <property type="match status" value="1"/>
</dbReference>
<dbReference type="PROSITE" id="PS50011">
    <property type="entry name" value="PROTEIN_KINASE_DOM"/>
    <property type="match status" value="1"/>
</dbReference>
<dbReference type="PROSITE" id="PS00108">
    <property type="entry name" value="PROTEIN_KINASE_ST"/>
    <property type="match status" value="1"/>
</dbReference>
<reference key="1">
    <citation type="journal article" date="1995" name="J. Biol. Chem.">
        <title>Isolation of a functional homolog of the cell cycle-specific NIMA protein kinase of Aspergillus nidulans and functional analysis of conserved residues.</title>
        <authorList>
            <person name="Pu R.T."/>
            <person name="Xu G."/>
            <person name="Wu L."/>
            <person name="Vierula J."/>
            <person name="O'Donnell K."/>
            <person name="Ye X.S."/>
            <person name="Osmani S.A."/>
        </authorList>
    </citation>
    <scope>NUCLEOTIDE SEQUENCE [MRNA]</scope>
</reference>
<reference key="2">
    <citation type="journal article" date="2003" name="Nature">
        <title>The genome sequence of the filamentous fungus Neurospora crassa.</title>
        <authorList>
            <person name="Galagan J.E."/>
            <person name="Calvo S.E."/>
            <person name="Borkovich K.A."/>
            <person name="Selker E.U."/>
            <person name="Read N.D."/>
            <person name="Jaffe D.B."/>
            <person name="FitzHugh W."/>
            <person name="Ma L.-J."/>
            <person name="Smirnov S."/>
            <person name="Purcell S."/>
            <person name="Rehman B."/>
            <person name="Elkins T."/>
            <person name="Engels R."/>
            <person name="Wang S."/>
            <person name="Nielsen C.B."/>
            <person name="Butler J."/>
            <person name="Endrizzi M."/>
            <person name="Qui D."/>
            <person name="Ianakiev P."/>
            <person name="Bell-Pedersen D."/>
            <person name="Nelson M.A."/>
            <person name="Werner-Washburne M."/>
            <person name="Selitrennikoff C.P."/>
            <person name="Kinsey J.A."/>
            <person name="Braun E.L."/>
            <person name="Zelter A."/>
            <person name="Schulte U."/>
            <person name="Kothe G.O."/>
            <person name="Jedd G."/>
            <person name="Mewes H.-W."/>
            <person name="Staben C."/>
            <person name="Marcotte E."/>
            <person name="Greenberg D."/>
            <person name="Roy A."/>
            <person name="Foley K."/>
            <person name="Naylor J."/>
            <person name="Stange-Thomann N."/>
            <person name="Barrett R."/>
            <person name="Gnerre S."/>
            <person name="Kamal M."/>
            <person name="Kamvysselis M."/>
            <person name="Mauceli E.W."/>
            <person name="Bielke C."/>
            <person name="Rudd S."/>
            <person name="Frishman D."/>
            <person name="Krystofova S."/>
            <person name="Rasmussen C."/>
            <person name="Metzenberg R.L."/>
            <person name="Perkins D.D."/>
            <person name="Kroken S."/>
            <person name="Cogoni C."/>
            <person name="Macino G."/>
            <person name="Catcheside D.E.A."/>
            <person name="Li W."/>
            <person name="Pratt R.J."/>
            <person name="Osmani S.A."/>
            <person name="DeSouza C.P.C."/>
            <person name="Glass N.L."/>
            <person name="Orbach M.J."/>
            <person name="Berglund J.A."/>
            <person name="Voelker R."/>
            <person name="Yarden O."/>
            <person name="Plamann M."/>
            <person name="Seiler S."/>
            <person name="Dunlap J.C."/>
            <person name="Radford A."/>
            <person name="Aramayo R."/>
            <person name="Natvig D.O."/>
            <person name="Alex L.A."/>
            <person name="Mannhaupt G."/>
            <person name="Ebbole D.J."/>
            <person name="Freitag M."/>
            <person name="Paulsen I."/>
            <person name="Sachs M.S."/>
            <person name="Lander E.S."/>
            <person name="Nusbaum C."/>
            <person name="Birren B.W."/>
        </authorList>
    </citation>
    <scope>NUCLEOTIDE SEQUENCE [LARGE SCALE GENOMIC DNA]</scope>
    <source>
        <strain>ATCC 24698 / 74-OR23-1A / CBS 708.71 / DSM 1257 / FGSC 987</strain>
    </source>
</reference>
<gene>
    <name type="primary">nim-1</name>
    <name type="ORF">NCU03187</name>
</gene>